<accession>P30866</accession>
<sequence>MSGLPQGRPTFGAAQNVSAVVAYDLSAHMLDVVAQAAEARQLKNITTRQGYAESLPFADNAFDIVISRYSAHHWHDVGAALREVNRILKPGGRLIVMDVMSPGHPVRDIWLQTVEALRDTSHVRNYASGEWLTLINEANLIVDNLITDKLPLEFSSWVARMRTPEALVDAIRIYQQSASTEVRTYFALQNDGFFTSDIIMVDAHKAA</sequence>
<proteinExistence type="inferred from homology"/>
<dbReference type="EMBL" id="X60739">
    <property type="status" value="NOT_ANNOTATED_CDS"/>
    <property type="molecule type" value="Genomic_DNA"/>
</dbReference>
<dbReference type="EMBL" id="D12650">
    <property type="protein sequence ID" value="BAA02173.1"/>
    <property type="molecule type" value="Genomic_DNA"/>
</dbReference>
<dbReference type="EMBL" id="U70214">
    <property type="protein sequence ID" value="AAB08632.1"/>
    <property type="molecule type" value="Genomic_DNA"/>
</dbReference>
<dbReference type="EMBL" id="U00096">
    <property type="protein sequence ID" value="AAC73315.1"/>
    <property type="molecule type" value="Genomic_DNA"/>
</dbReference>
<dbReference type="EMBL" id="AP009048">
    <property type="protein sequence ID" value="BAA77881.1"/>
    <property type="molecule type" value="Genomic_DNA"/>
</dbReference>
<dbReference type="PIR" id="JS0718">
    <property type="entry name" value="JS0718"/>
</dbReference>
<dbReference type="RefSeq" id="NP_414746.1">
    <property type="nucleotide sequence ID" value="NC_000913.3"/>
</dbReference>
<dbReference type="RefSeq" id="WP_000016007.1">
    <property type="nucleotide sequence ID" value="NZ_SSZK01000029.1"/>
</dbReference>
<dbReference type="SMR" id="P30866"/>
<dbReference type="BioGRID" id="4263471">
    <property type="interactions" value="8"/>
</dbReference>
<dbReference type="FunCoup" id="P30866">
    <property type="interactions" value="80"/>
</dbReference>
<dbReference type="STRING" id="511145.b0210"/>
<dbReference type="PaxDb" id="511145-b0210"/>
<dbReference type="EnsemblBacteria" id="AAC73315">
    <property type="protein sequence ID" value="AAC73315"/>
    <property type="gene ID" value="b0210"/>
</dbReference>
<dbReference type="GeneID" id="946197"/>
<dbReference type="KEGG" id="ecj:JW0200"/>
<dbReference type="KEGG" id="eco:b0210"/>
<dbReference type="KEGG" id="ecoc:C3026_00980"/>
<dbReference type="PATRIC" id="fig|1411691.4.peg.2074"/>
<dbReference type="EchoBASE" id="EB1604"/>
<dbReference type="eggNOG" id="COG2226">
    <property type="taxonomic scope" value="Bacteria"/>
</dbReference>
<dbReference type="HOGENOM" id="CLU_037990_10_0_6"/>
<dbReference type="InParanoid" id="P30866"/>
<dbReference type="OMA" id="FDFDWWC"/>
<dbReference type="OrthoDB" id="529208at2"/>
<dbReference type="PhylomeDB" id="P30866"/>
<dbReference type="BioCyc" id="EcoCyc:EG11651-MONOMER"/>
<dbReference type="PRO" id="PR:P30866"/>
<dbReference type="Proteomes" id="UP000000625">
    <property type="component" value="Chromosome"/>
</dbReference>
<dbReference type="GO" id="GO:0008168">
    <property type="term" value="F:methyltransferase activity"/>
    <property type="evidence" value="ECO:0000318"/>
    <property type="project" value="GO_Central"/>
</dbReference>
<dbReference type="GO" id="GO:0008757">
    <property type="term" value="F:S-adenosylmethionine-dependent methyltransferase activity"/>
    <property type="evidence" value="ECO:0007669"/>
    <property type="project" value="InterPro"/>
</dbReference>
<dbReference type="CDD" id="cd02440">
    <property type="entry name" value="AdoMet_MTases"/>
    <property type="match status" value="1"/>
</dbReference>
<dbReference type="Gene3D" id="3.40.50.150">
    <property type="entry name" value="Vaccinia Virus protein VP39"/>
    <property type="match status" value="1"/>
</dbReference>
<dbReference type="InterPro" id="IPR013216">
    <property type="entry name" value="Methyltransf_11"/>
</dbReference>
<dbReference type="InterPro" id="IPR050508">
    <property type="entry name" value="Methyltransf_Superfamily"/>
</dbReference>
<dbReference type="InterPro" id="IPR029063">
    <property type="entry name" value="SAM-dependent_MTases_sf"/>
</dbReference>
<dbReference type="PANTHER" id="PTHR42912">
    <property type="entry name" value="METHYLTRANSFERASE"/>
    <property type="match status" value="1"/>
</dbReference>
<dbReference type="PANTHER" id="PTHR42912:SF93">
    <property type="entry name" value="N6-ADENOSINE-METHYLTRANSFERASE TMT1A"/>
    <property type="match status" value="1"/>
</dbReference>
<dbReference type="Pfam" id="PF08241">
    <property type="entry name" value="Methyltransf_11"/>
    <property type="match status" value="1"/>
</dbReference>
<dbReference type="SUPFAM" id="SSF53335">
    <property type="entry name" value="S-adenosyl-L-methionine-dependent methyltransferases"/>
    <property type="match status" value="1"/>
</dbReference>
<evidence type="ECO:0000305" key="1"/>
<comment type="similarity">
    <text evidence="1">Belongs to the methyltransferase superfamily.</text>
</comment>
<name>YAFE_ECOLI</name>
<organism>
    <name type="scientific">Escherichia coli (strain K12)</name>
    <dbReference type="NCBI Taxonomy" id="83333"/>
    <lineage>
        <taxon>Bacteria</taxon>
        <taxon>Pseudomonadati</taxon>
        <taxon>Pseudomonadota</taxon>
        <taxon>Gammaproteobacteria</taxon>
        <taxon>Enterobacterales</taxon>
        <taxon>Enterobacteriaceae</taxon>
        <taxon>Escherichia</taxon>
    </lineage>
</organism>
<protein>
    <recommendedName>
        <fullName>Uncharacterized protein YafE</fullName>
    </recommendedName>
</protein>
<feature type="chain" id="PRO_0000168533" description="Uncharacterized protein YafE">
    <location>
        <begin position="1"/>
        <end position="207"/>
    </location>
</feature>
<gene>
    <name type="primary">yafE</name>
    <name type="ordered locus">b0210</name>
    <name type="ordered locus">JW0200</name>
</gene>
<reference key="1">
    <citation type="journal article" date="1991" name="FEMS Microbiol. Lett.">
        <title>Molecular cloning and DNA sequence of dniR, a gene affecting anaerobic expression of the Escherichia coli hexaheme nitrite reductase.</title>
        <authorList>
            <person name="Kajie S."/>
            <person name="Ideta R."/>
            <person name="Yamato I."/>
            <person name="Anraku Y."/>
        </authorList>
    </citation>
    <scope>PRELIMINARY NUCLEOTIDE SEQUENCE [GENOMIC DNA]</scope>
    <source>
        <strain>K12</strain>
    </source>
</reference>
<reference key="2">
    <citation type="submission" date="1992-07" db="EMBL/GenBank/DDBJ databases">
        <authorList>
            <person name="Nishimura K."/>
            <person name="Komine Y."/>
            <person name="Miyamoto K."/>
            <person name="Kitabatake M."/>
            <person name="Mathunaga F."/>
            <person name="Hisano T."/>
            <person name="Miki T."/>
            <person name="Inokuchi H."/>
        </authorList>
    </citation>
    <scope>NUCLEOTIDE SEQUENCE [GENOMIC DNA]</scope>
    <source>
        <strain>K12</strain>
    </source>
</reference>
<reference key="3">
    <citation type="submission" date="1996-02" db="EMBL/GenBank/DDBJ databases">
        <title>Systematic sequencing of the Escherichia coli genome: analysis of the 4.0 - 6.0 min (189,987 - 281,416bp) region.</title>
        <authorList>
            <person name="Takemoto K."/>
            <person name="Mori H."/>
            <person name="Murayama N."/>
            <person name="Kataoka K."/>
            <person name="Yano M."/>
            <person name="Itoh T."/>
            <person name="Yamamoto Y."/>
            <person name="Inokuchi H."/>
            <person name="Miki T."/>
            <person name="Hatada E."/>
            <person name="Fukuda R."/>
            <person name="Ichihara S."/>
            <person name="Mizuno T."/>
            <person name="Makino K."/>
            <person name="Nakata A."/>
            <person name="Yura T."/>
            <person name="Sampei G."/>
            <person name="Mizobuchi K."/>
        </authorList>
    </citation>
    <scope>NUCLEOTIDE SEQUENCE [LARGE SCALE GENOMIC DNA]</scope>
    <source>
        <strain>K12 / W3110 / ATCC 27325 / DSM 5911</strain>
    </source>
</reference>
<reference key="4">
    <citation type="submission" date="1997-01" db="EMBL/GenBank/DDBJ databases">
        <title>Sequence of minutes 4-25 of Escherichia coli.</title>
        <authorList>
            <person name="Chung E."/>
            <person name="Allen E."/>
            <person name="Araujo R."/>
            <person name="Aparicio A.M."/>
            <person name="Davis K."/>
            <person name="Duncan M."/>
            <person name="Federspiel N."/>
            <person name="Hyman R."/>
            <person name="Kalman S."/>
            <person name="Komp C."/>
            <person name="Kurdi O."/>
            <person name="Lew H."/>
            <person name="Lin D."/>
            <person name="Namath A."/>
            <person name="Oefner P."/>
            <person name="Roberts D."/>
            <person name="Schramm S."/>
            <person name="Davis R.W."/>
        </authorList>
    </citation>
    <scope>NUCLEOTIDE SEQUENCE [LARGE SCALE GENOMIC DNA]</scope>
    <source>
        <strain>K12 / MG1655 / ATCC 47076</strain>
    </source>
</reference>
<reference key="5">
    <citation type="journal article" date="1997" name="Science">
        <title>The complete genome sequence of Escherichia coli K-12.</title>
        <authorList>
            <person name="Blattner F.R."/>
            <person name="Plunkett G. III"/>
            <person name="Bloch C.A."/>
            <person name="Perna N.T."/>
            <person name="Burland V."/>
            <person name="Riley M."/>
            <person name="Collado-Vides J."/>
            <person name="Glasner J.D."/>
            <person name="Rode C.K."/>
            <person name="Mayhew G.F."/>
            <person name="Gregor J."/>
            <person name="Davis N.W."/>
            <person name="Kirkpatrick H.A."/>
            <person name="Goeden M.A."/>
            <person name="Rose D.J."/>
            <person name="Mau B."/>
            <person name="Shao Y."/>
        </authorList>
    </citation>
    <scope>NUCLEOTIDE SEQUENCE [LARGE SCALE GENOMIC DNA]</scope>
    <source>
        <strain>K12 / MG1655 / ATCC 47076</strain>
    </source>
</reference>
<reference key="6">
    <citation type="journal article" date="2006" name="Mol. Syst. Biol.">
        <title>Highly accurate genome sequences of Escherichia coli K-12 strains MG1655 and W3110.</title>
        <authorList>
            <person name="Hayashi K."/>
            <person name="Morooka N."/>
            <person name="Yamamoto Y."/>
            <person name="Fujita K."/>
            <person name="Isono K."/>
            <person name="Choi S."/>
            <person name="Ohtsubo E."/>
            <person name="Baba T."/>
            <person name="Wanner B.L."/>
            <person name="Mori H."/>
            <person name="Horiuchi T."/>
        </authorList>
    </citation>
    <scope>NUCLEOTIDE SEQUENCE [LARGE SCALE GENOMIC DNA]</scope>
    <source>
        <strain>K12 / W3110 / ATCC 27325 / DSM 5911</strain>
    </source>
</reference>
<keyword id="KW-1185">Reference proteome</keyword>